<dbReference type="EMBL" id="CH480817">
    <property type="protein sequence ID" value="EDW50057.1"/>
    <property type="molecule type" value="Genomic_DNA"/>
</dbReference>
<dbReference type="SMR" id="B4HVU2"/>
<dbReference type="STRING" id="7238.B4HVU2"/>
<dbReference type="GlyCosmos" id="B4HVU2">
    <property type="glycosylation" value="7 sites, No reported glycans"/>
</dbReference>
<dbReference type="EnsemblMetazoa" id="FBtr0197193">
    <property type="protein sequence ID" value="FBpp0195685"/>
    <property type="gene ID" value="FBgn0169134"/>
</dbReference>
<dbReference type="EnsemblMetazoa" id="XM_002034885.2">
    <property type="protein sequence ID" value="XP_002034921.1"/>
    <property type="gene ID" value="LOC6610335"/>
</dbReference>
<dbReference type="GeneID" id="6610335"/>
<dbReference type="KEGG" id="dse:6610335"/>
<dbReference type="HOGENOM" id="CLU_026602_0_0_1"/>
<dbReference type="OMA" id="RCEQNST"/>
<dbReference type="OrthoDB" id="17135at7215"/>
<dbReference type="PhylomeDB" id="B4HVU2"/>
<dbReference type="Proteomes" id="UP000001292">
    <property type="component" value="Unassembled WGS sequence"/>
</dbReference>
<dbReference type="GO" id="GO:0005886">
    <property type="term" value="C:plasma membrane"/>
    <property type="evidence" value="ECO:0007669"/>
    <property type="project" value="UniProtKB-SubCell"/>
</dbReference>
<dbReference type="GO" id="GO:0005509">
    <property type="term" value="F:calcium ion binding"/>
    <property type="evidence" value="ECO:0007669"/>
    <property type="project" value="InterPro"/>
</dbReference>
<dbReference type="GO" id="GO:0042813">
    <property type="term" value="F:Wnt receptor activity"/>
    <property type="evidence" value="ECO:0007669"/>
    <property type="project" value="TreeGrafter"/>
</dbReference>
<dbReference type="GO" id="GO:0017147">
    <property type="term" value="F:Wnt-protein binding"/>
    <property type="evidence" value="ECO:0007669"/>
    <property type="project" value="TreeGrafter"/>
</dbReference>
<dbReference type="GO" id="GO:0060070">
    <property type="term" value="P:canonical Wnt signaling pathway"/>
    <property type="evidence" value="ECO:0007669"/>
    <property type="project" value="TreeGrafter"/>
</dbReference>
<dbReference type="GO" id="GO:0048477">
    <property type="term" value="P:oogenesis"/>
    <property type="evidence" value="ECO:0007669"/>
    <property type="project" value="UniProtKB-KW"/>
</dbReference>
<dbReference type="GO" id="GO:0045938">
    <property type="term" value="P:positive regulation of circadian sleep/wake cycle, sleep"/>
    <property type="evidence" value="ECO:0007669"/>
    <property type="project" value="EnsemblMetazoa"/>
</dbReference>
<dbReference type="GO" id="GO:0007283">
    <property type="term" value="P:spermatogenesis"/>
    <property type="evidence" value="ECO:0007669"/>
    <property type="project" value="UniProtKB-KW"/>
</dbReference>
<dbReference type="GO" id="GO:0070328">
    <property type="term" value="P:triglyceride homeostasis"/>
    <property type="evidence" value="ECO:0007669"/>
    <property type="project" value="EnsemblMetazoa"/>
</dbReference>
<dbReference type="FunFam" id="2.10.25.10:FF:000744">
    <property type="entry name" value="Delta-like protein"/>
    <property type="match status" value="1"/>
</dbReference>
<dbReference type="FunFam" id="2.120.10.30:FF:000146">
    <property type="entry name" value="Protein cueball"/>
    <property type="match status" value="1"/>
</dbReference>
<dbReference type="Gene3D" id="2.10.25.10">
    <property type="entry name" value="Laminin"/>
    <property type="match status" value="3"/>
</dbReference>
<dbReference type="Gene3D" id="2.120.10.30">
    <property type="entry name" value="TolB, C-terminal domain"/>
    <property type="match status" value="1"/>
</dbReference>
<dbReference type="InterPro" id="IPR011042">
    <property type="entry name" value="6-blade_b-propeller_TolB-like"/>
</dbReference>
<dbReference type="InterPro" id="IPR050778">
    <property type="entry name" value="Cueball_EGF_LRP_Nidogen"/>
</dbReference>
<dbReference type="InterPro" id="IPR001881">
    <property type="entry name" value="EGF-like_Ca-bd_dom"/>
</dbReference>
<dbReference type="InterPro" id="IPR000742">
    <property type="entry name" value="EGF-like_dom"/>
</dbReference>
<dbReference type="InterPro" id="IPR000033">
    <property type="entry name" value="LDLR_classB_rpt"/>
</dbReference>
<dbReference type="PANTHER" id="PTHR46513:SF42">
    <property type="entry name" value="PROTEIN CUEBALL"/>
    <property type="match status" value="1"/>
</dbReference>
<dbReference type="PANTHER" id="PTHR46513">
    <property type="entry name" value="VITELLOGENIN RECEPTOR-LIKE PROTEIN-RELATED-RELATED"/>
    <property type="match status" value="1"/>
</dbReference>
<dbReference type="Pfam" id="PF00058">
    <property type="entry name" value="Ldl_recept_b"/>
    <property type="match status" value="1"/>
</dbReference>
<dbReference type="SMART" id="SM00181">
    <property type="entry name" value="EGF"/>
    <property type="match status" value="3"/>
</dbReference>
<dbReference type="SMART" id="SM00179">
    <property type="entry name" value="EGF_CA"/>
    <property type="match status" value="1"/>
</dbReference>
<dbReference type="SMART" id="SM00135">
    <property type="entry name" value="LY"/>
    <property type="match status" value="4"/>
</dbReference>
<dbReference type="SUPFAM" id="SSF57196">
    <property type="entry name" value="EGF/Laminin"/>
    <property type="match status" value="2"/>
</dbReference>
<dbReference type="SUPFAM" id="SSF63825">
    <property type="entry name" value="YWTD domain"/>
    <property type="match status" value="1"/>
</dbReference>
<dbReference type="PROSITE" id="PS00022">
    <property type="entry name" value="EGF_1"/>
    <property type="match status" value="3"/>
</dbReference>
<dbReference type="PROSITE" id="PS01186">
    <property type="entry name" value="EGF_2"/>
    <property type="match status" value="2"/>
</dbReference>
<dbReference type="PROSITE" id="PS50026">
    <property type="entry name" value="EGF_3"/>
    <property type="match status" value="2"/>
</dbReference>
<dbReference type="PROSITE" id="PS51120">
    <property type="entry name" value="LDLRB"/>
    <property type="match status" value="3"/>
</dbReference>
<name>CUE_DROSE</name>
<feature type="signal peptide" evidence="2">
    <location>
        <begin position="1"/>
        <end position="26"/>
    </location>
</feature>
<feature type="chain" id="PRO_0000386576" description="Protein cueball" evidence="2">
    <location>
        <begin position="27"/>
        <end position="644"/>
    </location>
</feature>
<feature type="topological domain" description="Extracellular" evidence="2">
    <location>
        <begin position="27"/>
        <end position="531"/>
    </location>
</feature>
<feature type="transmembrane region" description="Helical" evidence="2">
    <location>
        <begin position="532"/>
        <end position="552"/>
    </location>
</feature>
<feature type="topological domain" description="Cytoplasmic" evidence="2">
    <location>
        <begin position="553"/>
        <end position="644"/>
    </location>
</feature>
<feature type="repeat" description="LDL-receptor class B 1" evidence="2">
    <location>
        <begin position="121"/>
        <end position="166"/>
    </location>
</feature>
<feature type="repeat" description="LDL-receptor class B 2" evidence="2">
    <location>
        <begin position="167"/>
        <end position="211"/>
    </location>
</feature>
<feature type="repeat" description="LDL-receptor class B 3" evidence="2">
    <location>
        <begin position="212"/>
        <end position="257"/>
    </location>
</feature>
<feature type="domain" description="EGF-like 1" evidence="3">
    <location>
        <begin position="398"/>
        <end position="430"/>
    </location>
</feature>
<feature type="domain" description="EGF-like 2" evidence="3">
    <location>
        <begin position="433"/>
        <end position="471"/>
    </location>
</feature>
<feature type="region of interest" description="Disordered" evidence="4">
    <location>
        <begin position="280"/>
        <end position="301"/>
    </location>
</feature>
<feature type="compositionally biased region" description="Acidic residues" evidence="4">
    <location>
        <begin position="286"/>
        <end position="301"/>
    </location>
</feature>
<feature type="glycosylation site" description="N-linked (GlcNAc...) asparagine" evidence="2">
    <location>
        <position position="82"/>
    </location>
</feature>
<feature type="glycosylation site" description="N-linked (GlcNAc...) asparagine" evidence="2">
    <location>
        <position position="108"/>
    </location>
</feature>
<feature type="glycosylation site" description="N-linked (GlcNAc...) asparagine" evidence="2">
    <location>
        <position position="175"/>
    </location>
</feature>
<feature type="glycosylation site" description="N-linked (GlcNAc...) asparagine" evidence="2">
    <location>
        <position position="190"/>
    </location>
</feature>
<feature type="glycosylation site" description="N-linked (GlcNAc...) asparagine" evidence="2">
    <location>
        <position position="313"/>
    </location>
</feature>
<feature type="glycosylation site" description="N-linked (GlcNAc...) asparagine" evidence="2">
    <location>
        <position position="473"/>
    </location>
</feature>
<feature type="glycosylation site" description="N-linked (GlcNAc...) asparagine" evidence="2">
    <location>
        <position position="508"/>
    </location>
</feature>
<feature type="disulfide bond" evidence="3">
    <location>
        <begin position="402"/>
        <end position="411"/>
    </location>
</feature>
<feature type="disulfide bond" evidence="3">
    <location>
        <begin position="406"/>
        <end position="421"/>
    </location>
</feature>
<feature type="disulfide bond" evidence="3">
    <location>
        <begin position="437"/>
        <end position="447"/>
    </location>
</feature>
<feature type="disulfide bond" evidence="3">
    <location>
        <begin position="441"/>
        <end position="459"/>
    </location>
</feature>
<feature type="disulfide bond" evidence="3">
    <location>
        <begin position="461"/>
        <end position="470"/>
    </location>
</feature>
<protein>
    <recommendedName>
        <fullName evidence="1">Protein cueball</fullName>
    </recommendedName>
</protein>
<sequence>MIRIRFGMDVLLVLLLATCLLTPAHGTPLEWDFAVTLRTKIQFMDSSWQTIATAAHEFDELSALTFDESEELIYFNDLKHRNGSIFSLKRDLVAANHVAEQTIARTGNESVGGLAYDPLNMNLFWSDTEQRKIFFAPIYGSATPKVLVDLSAEGGRPDGVAVDVCRRKLYWTNSNVTHPTVERINLDGSNRTVIINSDIDMPRGIVVDQLSDRLFWIDDLKGVFFSVESCKLDGSDRQVVLKDKHHEPLNLAVTNDAIYWTDRTTRAVWSHPKVPVIKVTTTSKPEEEDSTDSTDFTDPEPMAEDCPLVRVANLSEEARGIVVRTGFYQRLQKDHHCASIVRKVKERVVEQNRKFEIRSMLDQKIKVLEDERCMNGGEYRAATDLCICPTGFKGSRCEIRECHNYCVHGTCQMSELAYPKCYCQPGFTGERCELSVCSGLCLNGGHCRVSKDENEAPSCECPAKFGGARCEQNSTEICSLFCRLLKHEPEMYVPFGCHSICEELAQDNSTYIAVPQYEHLEVCLTPRVWTSSVIIILVVGIVSSLLLVAVIVHGIRRLYKPKRPRIRKTFVVRKQARTNSAGDTPLTNRPLATEQCEITIENCCNMNICETPCFDPKLVEQTLSKSSCKEDKKILIHNMEDDLY</sequence>
<organism>
    <name type="scientific">Drosophila sechellia</name>
    <name type="common">Fruit fly</name>
    <dbReference type="NCBI Taxonomy" id="7238"/>
    <lineage>
        <taxon>Eukaryota</taxon>
        <taxon>Metazoa</taxon>
        <taxon>Ecdysozoa</taxon>
        <taxon>Arthropoda</taxon>
        <taxon>Hexapoda</taxon>
        <taxon>Insecta</taxon>
        <taxon>Pterygota</taxon>
        <taxon>Neoptera</taxon>
        <taxon>Endopterygota</taxon>
        <taxon>Diptera</taxon>
        <taxon>Brachycera</taxon>
        <taxon>Muscomorpha</taxon>
        <taxon>Ephydroidea</taxon>
        <taxon>Drosophilidae</taxon>
        <taxon>Drosophila</taxon>
        <taxon>Sophophora</taxon>
    </lineage>
</organism>
<reference evidence="6" key="1">
    <citation type="journal article" date="2007" name="Nature">
        <title>Evolution of genes and genomes on the Drosophila phylogeny.</title>
        <authorList>
            <consortium name="Drosophila 12 genomes consortium"/>
        </authorList>
    </citation>
    <scope>NUCLEOTIDE SEQUENCE [LARGE SCALE GENOMIC DNA]</scope>
    <source>
        <strain evidence="6">Rob3c / Tucson 14021-0248.25</strain>
    </source>
</reference>
<keyword id="KW-1003">Cell membrane</keyword>
<keyword id="KW-0221">Differentiation</keyword>
<keyword id="KW-1015">Disulfide bond</keyword>
<keyword id="KW-0245">EGF-like domain</keyword>
<keyword id="KW-0325">Glycoprotein</keyword>
<keyword id="KW-0472">Membrane</keyword>
<keyword id="KW-0896">Oogenesis</keyword>
<keyword id="KW-1185">Reference proteome</keyword>
<keyword id="KW-0677">Repeat</keyword>
<keyword id="KW-0732">Signal</keyword>
<keyword id="KW-0744">Spermatogenesis</keyword>
<keyword id="KW-0812">Transmembrane</keyword>
<keyword id="KW-1133">Transmembrane helix</keyword>
<comment type="function">
    <text evidence="1">Has a role in spermatogenesis and oogenesis.</text>
</comment>
<comment type="subcellular location">
    <subcellularLocation>
        <location evidence="5">Cell membrane</location>
        <topology evidence="5">Single-pass type I membrane protein</topology>
    </subcellularLocation>
</comment>
<comment type="similarity">
    <text evidence="5">Belongs to the cueball family.</text>
</comment>
<gene>
    <name evidence="1" type="primary">cue</name>
    <name type="ORF">GM14208</name>
</gene>
<evidence type="ECO:0000250" key="1">
    <source>
        <dbReference type="UniProtKB" id="Q95RU0"/>
    </source>
</evidence>
<evidence type="ECO:0000255" key="2"/>
<evidence type="ECO:0000255" key="3">
    <source>
        <dbReference type="PROSITE-ProRule" id="PRU00076"/>
    </source>
</evidence>
<evidence type="ECO:0000256" key="4">
    <source>
        <dbReference type="SAM" id="MobiDB-lite"/>
    </source>
</evidence>
<evidence type="ECO:0000305" key="5"/>
<evidence type="ECO:0000312" key="6">
    <source>
        <dbReference type="EMBL" id="EDW50057.1"/>
    </source>
</evidence>
<accession>B4HVU2</accession>
<proteinExistence type="inferred from homology"/>